<sequence length="195" mass="21096">MMNETGMAAAPAEAAWRIWQAPRQQTAFRQLMTAFSYPGRVVPLADGAESALLLVLTTLVDSACALADPLHALSSDDLRRLGVRSASVEAAEFVLADGNRLLEATPRLGSLENPEQGATVVMRVSRFGEGPHLRLTGPGIQHEQVLQVSGIDPGWWKQRSEWNAHFPLGVDLILVSGHEVAVLPRTTHINLKGAH</sequence>
<name>HTXG_STUST</name>
<accession>O69066</accession>
<organism>
    <name type="scientific">Stutzerimonas stutzeri</name>
    <name type="common">Pseudomonas stutzeri</name>
    <dbReference type="NCBI Taxonomy" id="316"/>
    <lineage>
        <taxon>Bacteria</taxon>
        <taxon>Pseudomonadati</taxon>
        <taxon>Pseudomonadota</taxon>
        <taxon>Gammaproteobacteria</taxon>
        <taxon>Pseudomonadales</taxon>
        <taxon>Pseudomonadaceae</taxon>
        <taxon>Stutzerimonas</taxon>
    </lineage>
</organism>
<proteinExistence type="inferred from homology"/>
<gene>
    <name type="primary">htxG</name>
</gene>
<comment type="function">
    <text>Belongs to an operon involved in hypophosphite oxidation. Exact function not known.</text>
</comment>
<comment type="similarity">
    <text evidence="1">Belongs to the PhnH family.</text>
</comment>
<dbReference type="EMBL" id="AF061267">
    <property type="protein sequence ID" value="AAC71717.1"/>
    <property type="molecule type" value="Genomic_DNA"/>
</dbReference>
<dbReference type="SMR" id="O69066"/>
<dbReference type="GO" id="GO:0019634">
    <property type="term" value="P:organic phosphonate metabolic process"/>
    <property type="evidence" value="ECO:0007669"/>
    <property type="project" value="InterPro"/>
</dbReference>
<dbReference type="Gene3D" id="3.40.50.11310">
    <property type="entry name" value="Bacterial phosphonate metabolism protein PhnH"/>
    <property type="match status" value="1"/>
</dbReference>
<dbReference type="InterPro" id="IPR038058">
    <property type="entry name" value="PhnH-like_sp"/>
</dbReference>
<dbReference type="InterPro" id="IPR008772">
    <property type="entry name" value="Phosphonate_metab_PhnH"/>
</dbReference>
<dbReference type="NCBIfam" id="TIGR03292">
    <property type="entry name" value="PhnH_redo"/>
    <property type="match status" value="1"/>
</dbReference>
<dbReference type="Pfam" id="PF05845">
    <property type="entry name" value="PhnH"/>
    <property type="match status" value="1"/>
</dbReference>
<dbReference type="PIRSF" id="PIRSF020680">
    <property type="entry name" value="PhnH"/>
    <property type="match status" value="1"/>
</dbReference>
<dbReference type="SUPFAM" id="SSF159709">
    <property type="entry name" value="PhnH-like"/>
    <property type="match status" value="1"/>
</dbReference>
<feature type="chain" id="PRO_0000084088" description="Putative C-P lyase subunit protein HtxG">
    <location>
        <begin position="1"/>
        <end position="195"/>
    </location>
</feature>
<evidence type="ECO:0000305" key="1"/>
<protein>
    <recommendedName>
        <fullName>Putative C-P lyase subunit protein HtxG</fullName>
    </recommendedName>
</protein>
<reference key="1">
    <citation type="journal article" date="1998" name="J. Bacteriol.">
        <title>Molecular genetic analysis of phosphite and hypophosphite oxidation by Pseudomonas stutzeri WM88.</title>
        <authorList>
            <person name="Metcalf W.W."/>
            <person name="Wolfe R.S."/>
        </authorList>
    </citation>
    <scope>NUCLEOTIDE SEQUENCE [GENOMIC DNA]</scope>
    <source>
        <strain>WM88</strain>
    </source>
</reference>